<comment type="function">
    <text evidence="1">Can constrain negative DNA supercoils. May be involved in maintaining the integrity of the genome at high temperature.</text>
</comment>
<comment type="biophysicochemical properties">
    <phDependence>
        <text evidence="2">Highly stable from pH 0 to pH 12.</text>
    </phDependence>
    <temperatureDependence>
        <text evidence="2">Hyperthermostable.</text>
    </temperatureDependence>
</comment>
<comment type="subunit">
    <text evidence="2">Monomer.</text>
</comment>
<comment type="subcellular location">
    <subcellularLocation>
        <location evidence="2">Cytoplasm</location>
    </subcellularLocation>
</comment>
<comment type="similarity">
    <text evidence="4">Belongs to the 7 kDa DNA-binding/endoribonuclease P2 family.</text>
</comment>
<organism>
    <name type="scientific">Saccharolobus islandicus (strain HVE10/4)</name>
    <name type="common">Sulfolobus islandicus</name>
    <dbReference type="NCBI Taxonomy" id="930943"/>
    <lineage>
        <taxon>Archaea</taxon>
        <taxon>Thermoproteota</taxon>
        <taxon>Thermoprotei</taxon>
        <taxon>Sulfolobales</taxon>
        <taxon>Sulfolobaceae</taxon>
        <taxon>Saccharolobus</taxon>
    </lineage>
</organism>
<reference key="1">
    <citation type="journal article" date="2011" name="J. Bacteriol.">
        <title>Genome analyses of icelandic strains of Sulfolobus islandicus, model organisms for genetic and virus-host interaction studies.</title>
        <authorList>
            <person name="Guo L."/>
            <person name="Brugger K."/>
            <person name="Liu C."/>
            <person name="Shah S.A."/>
            <person name="Zheng H."/>
            <person name="Zhu Y."/>
            <person name="Wang S."/>
            <person name="Lillestol R.K."/>
            <person name="Chen L."/>
            <person name="Frank J."/>
            <person name="Prangishvili D."/>
            <person name="Paulin L."/>
            <person name="She Q."/>
            <person name="Huang L."/>
            <person name="Garrett R.A."/>
        </authorList>
    </citation>
    <scope>NUCLEOTIDE SEQUENCE [LARGE SCALE GENOMIC DNA]</scope>
    <source>
        <strain>HVE10/4</strain>
    </source>
</reference>
<reference key="2">
    <citation type="journal article" date="2016" name="Sci. Rep.">
        <title>The archaeal '7 kDa DNA-binding' proteins: extended characterization of an old gifted family.</title>
        <authorList>
            <person name="Kalichuk V."/>
            <person name="Behar G."/>
            <person name="Renodon-Corniere A."/>
            <person name="Danovski G."/>
            <person name="Obal G."/>
            <person name="Barbet J."/>
            <person name="Mouratou B."/>
            <person name="Pecorari F."/>
        </authorList>
    </citation>
    <scope>DNA-BINDING</scope>
    <scope>BIOPHYSICOCHEMICAL PROPERTIES</scope>
    <scope>SUBUNIT</scope>
    <scope>SUBCELLULAR LOCATION</scope>
    <scope>NOMENCLATURE</scope>
</reference>
<sequence>MTTVKFKYKGEEKQVDTSKIKKVWRVGKMISFTYDEGGGKTGRGAVSEKDAPKELLQMLEKQKK</sequence>
<accession>F0NJT3</accession>
<gene>
    <name evidence="5" type="ordered locus">SiH_0663</name>
</gene>
<proteinExistence type="evidence at protein level"/>
<protein>
    <recommendedName>
        <fullName evidence="4">DNA-binding protein 7b</fullName>
    </recommendedName>
    <alternativeName>
        <fullName evidence="4">7 kDa DNA-binding protein b</fullName>
    </alternativeName>
    <alternativeName>
        <fullName evidence="3">Sis7b</fullName>
    </alternativeName>
</protein>
<dbReference type="EMBL" id="CP002426">
    <property type="protein sequence ID" value="ADX82020.1"/>
    <property type="molecule type" value="Genomic_DNA"/>
</dbReference>
<dbReference type="RefSeq" id="WP_014512200.1">
    <property type="nucleotide sequence ID" value="NC_017275.1"/>
</dbReference>
<dbReference type="SMR" id="F0NJT3"/>
<dbReference type="GeneID" id="15297198"/>
<dbReference type="KEGG" id="sih:SiH_0663"/>
<dbReference type="HOGENOM" id="CLU_2929990_0_0_2"/>
<dbReference type="Proteomes" id="UP000006395">
    <property type="component" value="Chromosome"/>
</dbReference>
<dbReference type="GO" id="GO:0005737">
    <property type="term" value="C:cytoplasm"/>
    <property type="evidence" value="ECO:0007669"/>
    <property type="project" value="UniProtKB-SubCell"/>
</dbReference>
<dbReference type="GO" id="GO:0003677">
    <property type="term" value="F:DNA binding"/>
    <property type="evidence" value="ECO:0007669"/>
    <property type="project" value="UniProtKB-KW"/>
</dbReference>
<dbReference type="GO" id="GO:0004521">
    <property type="term" value="F:RNA endonuclease activity"/>
    <property type="evidence" value="ECO:0007669"/>
    <property type="project" value="InterPro"/>
</dbReference>
<dbReference type="Gene3D" id="2.40.50.40">
    <property type="match status" value="1"/>
</dbReference>
<dbReference type="InterPro" id="IPR016197">
    <property type="entry name" value="Chromo-like_dom_sf"/>
</dbReference>
<dbReference type="InterPro" id="IPR003212">
    <property type="entry name" value="DNA-bd_7a-e_arc"/>
</dbReference>
<dbReference type="NCBIfam" id="NF045555">
    <property type="entry name" value="Sul7d"/>
    <property type="match status" value="1"/>
</dbReference>
<dbReference type="Pfam" id="PF02294">
    <property type="entry name" value="7kD_DNA_binding"/>
    <property type="match status" value="1"/>
</dbReference>
<dbReference type="SUPFAM" id="SSF54160">
    <property type="entry name" value="Chromo domain-like"/>
    <property type="match status" value="1"/>
</dbReference>
<name>DN7B_SACI0</name>
<keyword id="KW-0963">Cytoplasm</keyword>
<keyword id="KW-0238">DNA-binding</keyword>
<evidence type="ECO:0000250" key="1">
    <source>
        <dbReference type="UniProtKB" id="P61990"/>
    </source>
</evidence>
<evidence type="ECO:0000269" key="2">
    <source>
    </source>
</evidence>
<evidence type="ECO:0000303" key="3">
    <source>
    </source>
</evidence>
<evidence type="ECO:0000305" key="4"/>
<evidence type="ECO:0000312" key="5">
    <source>
        <dbReference type="EMBL" id="ADX82020.1"/>
    </source>
</evidence>
<feature type="chain" id="PRO_0000439051" description="DNA-binding protein 7b">
    <location>
        <begin position="1"/>
        <end position="64"/>
    </location>
</feature>